<gene>
    <name evidence="1" type="primary">panC</name>
    <name type="ordered locus">SO_0869</name>
</gene>
<comment type="function">
    <text evidence="1">Catalyzes the condensation of pantoate with beta-alanine in an ATP-dependent reaction via a pantoyl-adenylate intermediate.</text>
</comment>
<comment type="catalytic activity">
    <reaction evidence="1">
        <text>(R)-pantoate + beta-alanine + ATP = (R)-pantothenate + AMP + diphosphate + H(+)</text>
        <dbReference type="Rhea" id="RHEA:10912"/>
        <dbReference type="ChEBI" id="CHEBI:15378"/>
        <dbReference type="ChEBI" id="CHEBI:15980"/>
        <dbReference type="ChEBI" id="CHEBI:29032"/>
        <dbReference type="ChEBI" id="CHEBI:30616"/>
        <dbReference type="ChEBI" id="CHEBI:33019"/>
        <dbReference type="ChEBI" id="CHEBI:57966"/>
        <dbReference type="ChEBI" id="CHEBI:456215"/>
        <dbReference type="EC" id="6.3.2.1"/>
    </reaction>
</comment>
<comment type="pathway">
    <text evidence="1">Cofactor biosynthesis; (R)-pantothenate biosynthesis; (R)-pantothenate from (R)-pantoate and beta-alanine: step 1/1.</text>
</comment>
<comment type="subunit">
    <text evidence="1">Homodimer.</text>
</comment>
<comment type="subcellular location">
    <subcellularLocation>
        <location evidence="1">Cytoplasm</location>
    </subcellularLocation>
</comment>
<comment type="miscellaneous">
    <text evidence="1">The reaction proceeds by a bi uni uni bi ping pong mechanism.</text>
</comment>
<comment type="similarity">
    <text evidence="1">Belongs to the pantothenate synthetase family.</text>
</comment>
<evidence type="ECO:0000255" key="1">
    <source>
        <dbReference type="HAMAP-Rule" id="MF_00158"/>
    </source>
</evidence>
<proteinExistence type="inferred from homology"/>
<protein>
    <recommendedName>
        <fullName evidence="1">Pantothenate synthetase</fullName>
        <shortName evidence="1">PS</shortName>
        <ecNumber evidence="1">6.3.2.1</ecNumber>
    </recommendedName>
    <alternativeName>
        <fullName evidence="1">Pantoate--beta-alanine ligase</fullName>
    </alternativeName>
    <alternativeName>
        <fullName evidence="1">Pantoate-activating enzyme</fullName>
    </alternativeName>
</protein>
<accession>Q8EIH0</accession>
<keyword id="KW-0067">ATP-binding</keyword>
<keyword id="KW-0963">Cytoplasm</keyword>
<keyword id="KW-0436">Ligase</keyword>
<keyword id="KW-0547">Nucleotide-binding</keyword>
<keyword id="KW-0566">Pantothenate biosynthesis</keyword>
<keyword id="KW-1185">Reference proteome</keyword>
<organism>
    <name type="scientific">Shewanella oneidensis (strain ATCC 700550 / JCM 31522 / CIP 106686 / LMG 19005 / NCIMB 14063 / MR-1)</name>
    <dbReference type="NCBI Taxonomy" id="211586"/>
    <lineage>
        <taxon>Bacteria</taxon>
        <taxon>Pseudomonadati</taxon>
        <taxon>Pseudomonadota</taxon>
        <taxon>Gammaproteobacteria</taxon>
        <taxon>Alteromonadales</taxon>
        <taxon>Shewanellaceae</taxon>
        <taxon>Shewanella</taxon>
    </lineage>
</organism>
<name>PANC_SHEON</name>
<sequence>MITSAHIDDIRTQVRAWRAKGETVAFVPTMGNLHQGHITLVKEAAKKCDHVVASIFVNPMQFGQNEDLDAYPRTLEADSQALTAAGAELLFTPTPAIIYPKGLAQQTYVEVPGISDVLCGASRPGHFRGVATIVCKLFNIVQPDIAFFGNKDYQQLLVIRTMVEDLSLPIEIIGIDTIREASGLAMSSRNGYLTAQEKAAAPALKKAIDAMAQGIKQGISIEQVTEEAKASLTAAGFTPDYLEVRHADTLAKAETQDKALVILAAAYLGKARLIDNLRFDR</sequence>
<dbReference type="EC" id="6.3.2.1" evidence="1"/>
<dbReference type="EMBL" id="AE014299">
    <property type="protein sequence ID" value="AAN53945.1"/>
    <property type="molecule type" value="Genomic_DNA"/>
</dbReference>
<dbReference type="RefSeq" id="NP_716500.1">
    <property type="nucleotide sequence ID" value="NC_004347.2"/>
</dbReference>
<dbReference type="RefSeq" id="WP_011071159.1">
    <property type="nucleotide sequence ID" value="NC_004347.2"/>
</dbReference>
<dbReference type="SMR" id="Q8EIH0"/>
<dbReference type="STRING" id="211586.SO_0869"/>
<dbReference type="PaxDb" id="211586-SO_0869"/>
<dbReference type="KEGG" id="son:SO_0869"/>
<dbReference type="PATRIC" id="fig|211586.12.peg.833"/>
<dbReference type="eggNOG" id="COG0414">
    <property type="taxonomic scope" value="Bacteria"/>
</dbReference>
<dbReference type="HOGENOM" id="CLU_047148_0_0_6"/>
<dbReference type="OrthoDB" id="9773087at2"/>
<dbReference type="PhylomeDB" id="Q8EIH0"/>
<dbReference type="BioCyc" id="SONE211586:G1GMP-811-MONOMER"/>
<dbReference type="UniPathway" id="UPA00028">
    <property type="reaction ID" value="UER00005"/>
</dbReference>
<dbReference type="Proteomes" id="UP000008186">
    <property type="component" value="Chromosome"/>
</dbReference>
<dbReference type="GO" id="GO:0005829">
    <property type="term" value="C:cytosol"/>
    <property type="evidence" value="ECO:0000318"/>
    <property type="project" value="GO_Central"/>
</dbReference>
<dbReference type="GO" id="GO:0005524">
    <property type="term" value="F:ATP binding"/>
    <property type="evidence" value="ECO:0007669"/>
    <property type="project" value="UniProtKB-KW"/>
</dbReference>
<dbReference type="GO" id="GO:0004592">
    <property type="term" value="F:pantoate-beta-alanine ligase activity"/>
    <property type="evidence" value="ECO:0000318"/>
    <property type="project" value="GO_Central"/>
</dbReference>
<dbReference type="GO" id="GO:0015940">
    <property type="term" value="P:pantothenate biosynthetic process"/>
    <property type="evidence" value="ECO:0000318"/>
    <property type="project" value="GO_Central"/>
</dbReference>
<dbReference type="CDD" id="cd00560">
    <property type="entry name" value="PanC"/>
    <property type="match status" value="1"/>
</dbReference>
<dbReference type="FunFam" id="3.30.1300.10:FF:000001">
    <property type="entry name" value="Pantothenate synthetase"/>
    <property type="match status" value="1"/>
</dbReference>
<dbReference type="FunFam" id="3.40.50.620:FF:000013">
    <property type="entry name" value="Pantothenate synthetase"/>
    <property type="match status" value="1"/>
</dbReference>
<dbReference type="Gene3D" id="3.40.50.620">
    <property type="entry name" value="HUPs"/>
    <property type="match status" value="1"/>
</dbReference>
<dbReference type="Gene3D" id="3.30.1300.10">
    <property type="entry name" value="Pantoate-beta-alanine ligase, C-terminal domain"/>
    <property type="match status" value="1"/>
</dbReference>
<dbReference type="HAMAP" id="MF_00158">
    <property type="entry name" value="PanC"/>
    <property type="match status" value="1"/>
</dbReference>
<dbReference type="InterPro" id="IPR004821">
    <property type="entry name" value="Cyt_trans-like"/>
</dbReference>
<dbReference type="InterPro" id="IPR003721">
    <property type="entry name" value="Pantoate_ligase"/>
</dbReference>
<dbReference type="InterPro" id="IPR042176">
    <property type="entry name" value="Pantoate_ligase_C"/>
</dbReference>
<dbReference type="InterPro" id="IPR014729">
    <property type="entry name" value="Rossmann-like_a/b/a_fold"/>
</dbReference>
<dbReference type="NCBIfam" id="TIGR00125">
    <property type="entry name" value="cyt_tran_rel"/>
    <property type="match status" value="1"/>
</dbReference>
<dbReference type="NCBIfam" id="TIGR00018">
    <property type="entry name" value="panC"/>
    <property type="match status" value="1"/>
</dbReference>
<dbReference type="PANTHER" id="PTHR21299">
    <property type="entry name" value="CYTIDYLATE KINASE/PANTOATE-BETA-ALANINE LIGASE"/>
    <property type="match status" value="1"/>
</dbReference>
<dbReference type="PANTHER" id="PTHR21299:SF1">
    <property type="entry name" value="PANTOATE--BETA-ALANINE LIGASE"/>
    <property type="match status" value="1"/>
</dbReference>
<dbReference type="Pfam" id="PF02569">
    <property type="entry name" value="Pantoate_ligase"/>
    <property type="match status" value="1"/>
</dbReference>
<dbReference type="SUPFAM" id="SSF52374">
    <property type="entry name" value="Nucleotidylyl transferase"/>
    <property type="match status" value="1"/>
</dbReference>
<reference key="1">
    <citation type="journal article" date="2002" name="Nat. Biotechnol.">
        <title>Genome sequence of the dissimilatory metal ion-reducing bacterium Shewanella oneidensis.</title>
        <authorList>
            <person name="Heidelberg J.F."/>
            <person name="Paulsen I.T."/>
            <person name="Nelson K.E."/>
            <person name="Gaidos E.J."/>
            <person name="Nelson W.C."/>
            <person name="Read T.D."/>
            <person name="Eisen J.A."/>
            <person name="Seshadri R."/>
            <person name="Ward N.L."/>
            <person name="Methe B.A."/>
            <person name="Clayton R.A."/>
            <person name="Meyer T."/>
            <person name="Tsapin A."/>
            <person name="Scott J."/>
            <person name="Beanan M.J."/>
            <person name="Brinkac L.M."/>
            <person name="Daugherty S.C."/>
            <person name="DeBoy R.T."/>
            <person name="Dodson R.J."/>
            <person name="Durkin A.S."/>
            <person name="Haft D.H."/>
            <person name="Kolonay J.F."/>
            <person name="Madupu R."/>
            <person name="Peterson J.D."/>
            <person name="Umayam L.A."/>
            <person name="White O."/>
            <person name="Wolf A.M."/>
            <person name="Vamathevan J.J."/>
            <person name="Weidman J.F."/>
            <person name="Impraim M."/>
            <person name="Lee K."/>
            <person name="Berry K.J."/>
            <person name="Lee C."/>
            <person name="Mueller J."/>
            <person name="Khouri H.M."/>
            <person name="Gill J."/>
            <person name="Utterback T.R."/>
            <person name="McDonald L.A."/>
            <person name="Feldblyum T.V."/>
            <person name="Smith H.O."/>
            <person name="Venter J.C."/>
            <person name="Nealson K.H."/>
            <person name="Fraser C.M."/>
        </authorList>
    </citation>
    <scope>NUCLEOTIDE SEQUENCE [LARGE SCALE GENOMIC DNA]</scope>
    <source>
        <strain>ATCC 700550 / JCM 31522 / CIP 106686 / LMG 19005 / NCIMB 14063 / MR-1</strain>
    </source>
</reference>
<feature type="chain" id="PRO_0000128267" description="Pantothenate synthetase">
    <location>
        <begin position="1"/>
        <end position="281"/>
    </location>
</feature>
<feature type="active site" description="Proton donor" evidence="1">
    <location>
        <position position="37"/>
    </location>
</feature>
<feature type="binding site" evidence="1">
    <location>
        <begin position="30"/>
        <end position="37"/>
    </location>
    <ligand>
        <name>ATP</name>
        <dbReference type="ChEBI" id="CHEBI:30616"/>
    </ligand>
</feature>
<feature type="binding site" evidence="1">
    <location>
        <position position="61"/>
    </location>
    <ligand>
        <name>(R)-pantoate</name>
        <dbReference type="ChEBI" id="CHEBI:15980"/>
    </ligand>
</feature>
<feature type="binding site" evidence="1">
    <location>
        <position position="61"/>
    </location>
    <ligand>
        <name>beta-alanine</name>
        <dbReference type="ChEBI" id="CHEBI:57966"/>
    </ligand>
</feature>
<feature type="binding site" evidence="1">
    <location>
        <begin position="149"/>
        <end position="152"/>
    </location>
    <ligand>
        <name>ATP</name>
        <dbReference type="ChEBI" id="CHEBI:30616"/>
    </ligand>
</feature>
<feature type="binding site" evidence="1">
    <location>
        <position position="155"/>
    </location>
    <ligand>
        <name>(R)-pantoate</name>
        <dbReference type="ChEBI" id="CHEBI:15980"/>
    </ligand>
</feature>
<feature type="binding site" evidence="1">
    <location>
        <position position="178"/>
    </location>
    <ligand>
        <name>ATP</name>
        <dbReference type="ChEBI" id="CHEBI:30616"/>
    </ligand>
</feature>
<feature type="binding site" evidence="1">
    <location>
        <begin position="186"/>
        <end position="189"/>
    </location>
    <ligand>
        <name>ATP</name>
        <dbReference type="ChEBI" id="CHEBI:30616"/>
    </ligand>
</feature>